<sequence>MITLAIPSKGRLKEQALEVLAKAGLAISLPGDERKYHARVEGLDNVEIAFLSASEIAGEIGQGAVDLGITGEDLVRENLADWEARAEIAARLGFGHADVVVAVPEIWLDVDTMADLDDVAADFRQRHGRRLRIATKYWRLTQQFFSQKHGIQVYRIVESLGATEGAPAAGLADVIVDITTTGSTLRANHLKVLGDGVVLKSQACLVASKKARTAGDEATLRDIVTKMAAAVG</sequence>
<organism>
    <name type="scientific">Mesorhizobium japonicum (strain LMG 29417 / CECT 9101 / MAFF 303099)</name>
    <name type="common">Mesorhizobium loti (strain MAFF 303099)</name>
    <dbReference type="NCBI Taxonomy" id="266835"/>
    <lineage>
        <taxon>Bacteria</taxon>
        <taxon>Pseudomonadati</taxon>
        <taxon>Pseudomonadota</taxon>
        <taxon>Alphaproteobacteria</taxon>
        <taxon>Hyphomicrobiales</taxon>
        <taxon>Phyllobacteriaceae</taxon>
        <taxon>Mesorhizobium</taxon>
    </lineage>
</organism>
<protein>
    <recommendedName>
        <fullName>ATP phosphoribosyltransferase</fullName>
        <shortName>ATP-PRT</shortName>
        <shortName>ATP-PRTase</shortName>
        <ecNumber>2.4.2.17</ecNumber>
    </recommendedName>
</protein>
<comment type="function">
    <text evidence="1">Catalyzes the condensation of ATP and 5-phosphoribose 1-diphosphate to form N'-(5'-phosphoribosyl)-ATP (PR-ATP). Has a crucial role in the pathway because the rate of histidine biosynthesis seems to be controlled primarily by regulation of HisG enzymatic activity (By similarity).</text>
</comment>
<comment type="catalytic activity">
    <reaction>
        <text>1-(5-phospho-beta-D-ribosyl)-ATP + diphosphate = 5-phospho-alpha-D-ribose 1-diphosphate + ATP</text>
        <dbReference type="Rhea" id="RHEA:18473"/>
        <dbReference type="ChEBI" id="CHEBI:30616"/>
        <dbReference type="ChEBI" id="CHEBI:33019"/>
        <dbReference type="ChEBI" id="CHEBI:58017"/>
        <dbReference type="ChEBI" id="CHEBI:73183"/>
        <dbReference type="EC" id="2.4.2.17"/>
    </reaction>
</comment>
<comment type="pathway">
    <text>Amino-acid biosynthesis; L-histidine biosynthesis; L-histidine from 5-phospho-alpha-D-ribose 1-diphosphate: step 1/9.</text>
</comment>
<comment type="subunit">
    <text evidence="1">Heteromultimer composed of HisG and HisZ subunits.</text>
</comment>
<comment type="subcellular location">
    <subcellularLocation>
        <location evidence="1">Cytoplasm</location>
    </subcellularLocation>
</comment>
<comment type="domain">
    <text>Lacks the C-terminal regulatory region which is replaced by HisZ.</text>
</comment>
<comment type="similarity">
    <text evidence="2">Belongs to the ATP phosphoribosyltransferase family. Short subfamily.</text>
</comment>
<keyword id="KW-0028">Amino-acid biosynthesis</keyword>
<keyword id="KW-0067">ATP-binding</keyword>
<keyword id="KW-0963">Cytoplasm</keyword>
<keyword id="KW-0328">Glycosyltransferase</keyword>
<keyword id="KW-0368">Histidine biosynthesis</keyword>
<keyword id="KW-0547">Nucleotide-binding</keyword>
<keyword id="KW-0808">Transferase</keyword>
<evidence type="ECO:0000250" key="1"/>
<evidence type="ECO:0000305" key="2"/>
<accession>Q987S8</accession>
<name>HIS1_RHILO</name>
<reference key="1">
    <citation type="journal article" date="2000" name="DNA Res.">
        <title>Complete genome structure of the nitrogen-fixing symbiotic bacterium Mesorhizobium loti.</title>
        <authorList>
            <person name="Kaneko T."/>
            <person name="Nakamura Y."/>
            <person name="Sato S."/>
            <person name="Asamizu E."/>
            <person name="Kato T."/>
            <person name="Sasamoto S."/>
            <person name="Watanabe A."/>
            <person name="Idesawa K."/>
            <person name="Ishikawa A."/>
            <person name="Kawashima K."/>
            <person name="Kimura T."/>
            <person name="Kishida Y."/>
            <person name="Kiyokawa C."/>
            <person name="Kohara M."/>
            <person name="Matsumoto M."/>
            <person name="Matsuno A."/>
            <person name="Mochizuki Y."/>
            <person name="Nakayama S."/>
            <person name="Nakazaki N."/>
            <person name="Shimpo S."/>
            <person name="Sugimoto M."/>
            <person name="Takeuchi C."/>
            <person name="Yamada M."/>
            <person name="Tabata S."/>
        </authorList>
    </citation>
    <scope>NUCLEOTIDE SEQUENCE [LARGE SCALE GENOMIC DNA]</scope>
    <source>
        <strain>LMG 29417 / CECT 9101 / MAFF 303099</strain>
    </source>
</reference>
<feature type="chain" id="PRO_0000151928" description="ATP phosphoribosyltransferase">
    <location>
        <begin position="1"/>
        <end position="232"/>
    </location>
</feature>
<proteinExistence type="inferred from homology"/>
<dbReference type="EC" id="2.4.2.17"/>
<dbReference type="EMBL" id="BA000012">
    <property type="protein sequence ID" value="BAB53122.1"/>
    <property type="molecule type" value="Genomic_DNA"/>
</dbReference>
<dbReference type="RefSeq" id="WP_010914432.1">
    <property type="nucleotide sequence ID" value="NC_002678.2"/>
</dbReference>
<dbReference type="SMR" id="Q987S8"/>
<dbReference type="KEGG" id="mlo:mlr6931"/>
<dbReference type="PATRIC" id="fig|266835.9.peg.5513"/>
<dbReference type="eggNOG" id="COG0040">
    <property type="taxonomic scope" value="Bacteria"/>
</dbReference>
<dbReference type="HOGENOM" id="CLU_038115_0_1_5"/>
<dbReference type="UniPathway" id="UPA00031">
    <property type="reaction ID" value="UER00006"/>
</dbReference>
<dbReference type="Proteomes" id="UP000000552">
    <property type="component" value="Chromosome"/>
</dbReference>
<dbReference type="GO" id="GO:0005737">
    <property type="term" value="C:cytoplasm"/>
    <property type="evidence" value="ECO:0007669"/>
    <property type="project" value="UniProtKB-SubCell"/>
</dbReference>
<dbReference type="GO" id="GO:0005524">
    <property type="term" value="F:ATP binding"/>
    <property type="evidence" value="ECO:0007669"/>
    <property type="project" value="UniProtKB-KW"/>
</dbReference>
<dbReference type="GO" id="GO:0003879">
    <property type="term" value="F:ATP phosphoribosyltransferase activity"/>
    <property type="evidence" value="ECO:0007669"/>
    <property type="project" value="UniProtKB-UniRule"/>
</dbReference>
<dbReference type="GO" id="GO:0000105">
    <property type="term" value="P:L-histidine biosynthetic process"/>
    <property type="evidence" value="ECO:0007669"/>
    <property type="project" value="UniProtKB-UniRule"/>
</dbReference>
<dbReference type="CDD" id="cd13593">
    <property type="entry name" value="PBP2_HisGL3"/>
    <property type="match status" value="1"/>
</dbReference>
<dbReference type="Gene3D" id="3.40.190.10">
    <property type="entry name" value="Periplasmic binding protein-like II"/>
    <property type="match status" value="2"/>
</dbReference>
<dbReference type="HAMAP" id="MF_01018">
    <property type="entry name" value="HisG_Short"/>
    <property type="match status" value="1"/>
</dbReference>
<dbReference type="InterPro" id="IPR013820">
    <property type="entry name" value="ATP_PRibTrfase_cat"/>
</dbReference>
<dbReference type="InterPro" id="IPR018198">
    <property type="entry name" value="ATP_PRibTrfase_CS"/>
</dbReference>
<dbReference type="InterPro" id="IPR001348">
    <property type="entry name" value="ATP_PRibTrfase_HisG"/>
</dbReference>
<dbReference type="InterPro" id="IPR024893">
    <property type="entry name" value="ATP_PRibTrfase_HisG_short"/>
</dbReference>
<dbReference type="NCBIfam" id="TIGR00070">
    <property type="entry name" value="hisG"/>
    <property type="match status" value="1"/>
</dbReference>
<dbReference type="PANTHER" id="PTHR21403:SF8">
    <property type="entry name" value="ATP PHOSPHORIBOSYLTRANSFERASE"/>
    <property type="match status" value="1"/>
</dbReference>
<dbReference type="PANTHER" id="PTHR21403">
    <property type="entry name" value="ATP PHOSPHORIBOSYLTRANSFERASE ATP-PRTASE"/>
    <property type="match status" value="1"/>
</dbReference>
<dbReference type="Pfam" id="PF01634">
    <property type="entry name" value="HisG"/>
    <property type="match status" value="1"/>
</dbReference>
<dbReference type="SUPFAM" id="SSF53850">
    <property type="entry name" value="Periplasmic binding protein-like II"/>
    <property type="match status" value="1"/>
</dbReference>
<dbReference type="PROSITE" id="PS01316">
    <property type="entry name" value="ATP_P_PHORIBOSYLTR"/>
    <property type="match status" value="1"/>
</dbReference>
<gene>
    <name type="primary">hisG</name>
    <name type="ordered locus">mlr6931</name>
</gene>